<name>PGSA_SALPA</name>
<dbReference type="EC" id="2.7.8.5" evidence="2"/>
<dbReference type="EMBL" id="CP000026">
    <property type="protein sequence ID" value="AAV76903.1"/>
    <property type="molecule type" value="Genomic_DNA"/>
</dbReference>
<dbReference type="RefSeq" id="WP_001160192.1">
    <property type="nucleotide sequence ID" value="NC_006511.1"/>
</dbReference>
<dbReference type="SMR" id="Q5PI18"/>
<dbReference type="DNASU" id="3178041"/>
<dbReference type="KEGG" id="spt:SPA0924"/>
<dbReference type="HOGENOM" id="CLU_051314_2_1_6"/>
<dbReference type="UniPathway" id="UPA00084">
    <property type="reaction ID" value="UER00503"/>
</dbReference>
<dbReference type="Proteomes" id="UP000008185">
    <property type="component" value="Chromosome"/>
</dbReference>
<dbReference type="GO" id="GO:0005886">
    <property type="term" value="C:plasma membrane"/>
    <property type="evidence" value="ECO:0007669"/>
    <property type="project" value="UniProtKB-SubCell"/>
</dbReference>
<dbReference type="GO" id="GO:0008444">
    <property type="term" value="F:CDP-diacylglycerol-glycerol-3-phosphate 3-phosphatidyltransferase activity"/>
    <property type="evidence" value="ECO:0007669"/>
    <property type="project" value="UniProtKB-UniRule"/>
</dbReference>
<dbReference type="GO" id="GO:0006655">
    <property type="term" value="P:phosphatidylglycerol biosynthetic process"/>
    <property type="evidence" value="ECO:0007669"/>
    <property type="project" value="UniProtKB-UniRule"/>
</dbReference>
<dbReference type="FunFam" id="1.20.120.1760:FF:000001">
    <property type="entry name" value="CDP-diacylglycerol--glycerol-3-phosphate 3-phosphatidyltransferase"/>
    <property type="match status" value="1"/>
</dbReference>
<dbReference type="Gene3D" id="1.20.120.1760">
    <property type="match status" value="1"/>
</dbReference>
<dbReference type="HAMAP" id="MF_01437">
    <property type="entry name" value="PgsA"/>
    <property type="match status" value="1"/>
</dbReference>
<dbReference type="InterPro" id="IPR050324">
    <property type="entry name" value="CDP-alcohol_PTase-I"/>
</dbReference>
<dbReference type="InterPro" id="IPR000462">
    <property type="entry name" value="CDP-OH_P_trans"/>
</dbReference>
<dbReference type="InterPro" id="IPR043130">
    <property type="entry name" value="CDP-OH_PTrfase_TM_dom"/>
</dbReference>
<dbReference type="InterPro" id="IPR048254">
    <property type="entry name" value="CDP_ALCOHOL_P_TRANSF_CS"/>
</dbReference>
<dbReference type="InterPro" id="IPR023762">
    <property type="entry name" value="PGP_synthase_bac"/>
</dbReference>
<dbReference type="InterPro" id="IPR004570">
    <property type="entry name" value="Phosphatidylglycerol_P_synth"/>
</dbReference>
<dbReference type="NCBIfam" id="TIGR00560">
    <property type="entry name" value="pgsA"/>
    <property type="match status" value="1"/>
</dbReference>
<dbReference type="NCBIfam" id="NF008090">
    <property type="entry name" value="PRK10832.1"/>
    <property type="match status" value="1"/>
</dbReference>
<dbReference type="PANTHER" id="PTHR14269:SF62">
    <property type="entry name" value="CDP-DIACYLGLYCEROL--GLYCEROL-3-PHOSPHATE 3-PHOSPHATIDYLTRANSFERASE 1, CHLOROPLASTIC"/>
    <property type="match status" value="1"/>
</dbReference>
<dbReference type="PANTHER" id="PTHR14269">
    <property type="entry name" value="CDP-DIACYLGLYCEROL--GLYCEROL-3-PHOSPHATE 3-PHOSPHATIDYLTRANSFERASE-RELATED"/>
    <property type="match status" value="1"/>
</dbReference>
<dbReference type="Pfam" id="PF01066">
    <property type="entry name" value="CDP-OH_P_transf"/>
    <property type="match status" value="1"/>
</dbReference>
<dbReference type="PIRSF" id="PIRSF000847">
    <property type="entry name" value="Phos_ph_gly_syn"/>
    <property type="match status" value="1"/>
</dbReference>
<dbReference type="PROSITE" id="PS00379">
    <property type="entry name" value="CDP_ALCOHOL_P_TRANSF"/>
    <property type="match status" value="1"/>
</dbReference>
<comment type="function">
    <text evidence="2">Catalyzes the conversion of cytidine diphosphate diacylglycerol (CDP-DG) and glycerol 3-phosphate into phosphatidylglycerol. Essential for the synthesis of anionic phospholipids, thereby playing a role in balancing the ratio of zwitterionic and anionic phospholipids, which is thought to be important for normal membrane function.</text>
</comment>
<comment type="catalytic activity">
    <reaction evidence="2">
        <text>a CDP-1,2-diacyl-sn-glycerol + sn-glycerol 3-phosphate = a 1,2-diacyl-sn-glycero-3-phospho-(1'-sn-glycero-3'-phosphate) + CMP + H(+)</text>
        <dbReference type="Rhea" id="RHEA:12593"/>
        <dbReference type="ChEBI" id="CHEBI:15378"/>
        <dbReference type="ChEBI" id="CHEBI:57597"/>
        <dbReference type="ChEBI" id="CHEBI:58332"/>
        <dbReference type="ChEBI" id="CHEBI:60110"/>
        <dbReference type="ChEBI" id="CHEBI:60377"/>
        <dbReference type="EC" id="2.7.8.5"/>
    </reaction>
</comment>
<comment type="pathway">
    <text evidence="2">Phospholipid metabolism; phosphatidylglycerol biosynthesis; phosphatidylglycerol from CDP-diacylglycerol: step 1/2.</text>
</comment>
<comment type="subcellular location">
    <subcellularLocation>
        <location evidence="2">Cell inner membrane</location>
        <topology evidence="2">Multi-pass membrane protein</topology>
    </subcellularLocation>
</comment>
<comment type="similarity">
    <text evidence="2">Belongs to the CDP-alcohol phosphatidyltransferase class-I family.</text>
</comment>
<protein>
    <recommendedName>
        <fullName evidence="2">CDP-diacylglycerol--glycerol-3-phosphate 3-phosphatidyltransferase</fullName>
        <ecNumber evidence="2">2.7.8.5</ecNumber>
    </recommendedName>
    <alternativeName>
        <fullName evidence="2">Phosphatidylglycerophosphate synthase</fullName>
        <shortName evidence="2">PGP synthase</shortName>
    </alternativeName>
</protein>
<accession>Q5PI18</accession>
<evidence type="ECO:0000250" key="1"/>
<evidence type="ECO:0000255" key="2">
    <source>
        <dbReference type="HAMAP-Rule" id="MF_01437"/>
    </source>
</evidence>
<organism>
    <name type="scientific">Salmonella paratyphi A (strain ATCC 9150 / SARB42)</name>
    <dbReference type="NCBI Taxonomy" id="295319"/>
    <lineage>
        <taxon>Bacteria</taxon>
        <taxon>Pseudomonadati</taxon>
        <taxon>Pseudomonadota</taxon>
        <taxon>Gammaproteobacteria</taxon>
        <taxon>Enterobacterales</taxon>
        <taxon>Enterobacteriaceae</taxon>
        <taxon>Salmonella</taxon>
    </lineage>
</organism>
<proteinExistence type="inferred from homology"/>
<keyword id="KW-0997">Cell inner membrane</keyword>
<keyword id="KW-1003">Cell membrane</keyword>
<keyword id="KW-0444">Lipid biosynthesis</keyword>
<keyword id="KW-0443">Lipid metabolism</keyword>
<keyword id="KW-0472">Membrane</keyword>
<keyword id="KW-0594">Phospholipid biosynthesis</keyword>
<keyword id="KW-1208">Phospholipid metabolism</keyword>
<keyword id="KW-0808">Transferase</keyword>
<keyword id="KW-0812">Transmembrane</keyword>
<keyword id="KW-1133">Transmembrane helix</keyword>
<gene>
    <name evidence="2" type="primary">pgsA</name>
    <name type="ordered locus">SPA0924</name>
</gene>
<reference key="1">
    <citation type="journal article" date="2004" name="Nat. Genet.">
        <title>Comparison of genome degradation in Paratyphi A and Typhi, human-restricted serovars of Salmonella enterica that cause typhoid.</title>
        <authorList>
            <person name="McClelland M."/>
            <person name="Sanderson K.E."/>
            <person name="Clifton S.W."/>
            <person name="Latreille P."/>
            <person name="Porwollik S."/>
            <person name="Sabo A."/>
            <person name="Meyer R."/>
            <person name="Bieri T."/>
            <person name="Ozersky P."/>
            <person name="McLellan M."/>
            <person name="Harkins C.R."/>
            <person name="Wang C."/>
            <person name="Nguyen C."/>
            <person name="Berghoff A."/>
            <person name="Elliott G."/>
            <person name="Kohlberg S."/>
            <person name="Strong C."/>
            <person name="Du F."/>
            <person name="Carter J."/>
            <person name="Kremizki C."/>
            <person name="Layman D."/>
            <person name="Leonard S."/>
            <person name="Sun H."/>
            <person name="Fulton L."/>
            <person name="Nash W."/>
            <person name="Miner T."/>
            <person name="Minx P."/>
            <person name="Delehaunty K."/>
            <person name="Fronick C."/>
            <person name="Magrini V."/>
            <person name="Nhan M."/>
            <person name="Warren W."/>
            <person name="Florea L."/>
            <person name="Spieth J."/>
            <person name="Wilson R.K."/>
        </authorList>
    </citation>
    <scope>NUCLEOTIDE SEQUENCE [LARGE SCALE GENOMIC DNA]</scope>
    <source>
        <strain>ATCC 9150 / SARB42</strain>
    </source>
</reference>
<feature type="initiator methionine" description="Removed" evidence="1">
    <location>
        <position position="1"/>
    </location>
</feature>
<feature type="chain" id="PRO_0000239126" description="CDP-diacylglycerol--glycerol-3-phosphate 3-phosphatidyltransferase">
    <location>
        <begin position="2"/>
        <end position="182"/>
    </location>
</feature>
<feature type="topological domain" description="Cytoplasmic" evidence="2">
    <location>
        <begin position="2"/>
        <end position="12"/>
    </location>
</feature>
<feature type="transmembrane region" description="Helical" evidence="2">
    <location>
        <begin position="13"/>
        <end position="37"/>
    </location>
</feature>
<feature type="topological domain" description="Periplasmic" evidence="2">
    <location>
        <begin position="38"/>
        <end position="60"/>
    </location>
</feature>
<feature type="transmembrane region" description="Helical" evidence="2">
    <location>
        <begin position="61"/>
        <end position="81"/>
    </location>
</feature>
<feature type="topological domain" description="Cytoplasmic" evidence="2">
    <location>
        <begin position="82"/>
        <end position="86"/>
    </location>
</feature>
<feature type="transmembrane region" description="Helical" evidence="2">
    <location>
        <begin position="87"/>
        <end position="107"/>
    </location>
</feature>
<feature type="topological domain" description="Periplasmic" evidence="2">
    <location>
        <begin position="108"/>
        <end position="145"/>
    </location>
</feature>
<feature type="transmembrane region" description="Helical" evidence="2">
    <location>
        <begin position="146"/>
        <end position="168"/>
    </location>
</feature>
<feature type="topological domain" description="Cytoplasmic" evidence="2">
    <location>
        <begin position="169"/>
        <end position="181"/>
    </location>
</feature>
<sequence>MQFNIPTLLTLFRVILIPFFVVVFYLPFAWAPMVSALIFCIAAITDWFDGFLARRWNQSTRFGAFLDPVADKVLVAIAMVLVTEHYHSWWVTLPAATMIAREIIISALREWMAELGKRSSVAVSWIGKVKTTAQMVALAWLLWRPNIWVEYAGIALFFVAAVLTLWSMLQYLSAARGDLLDQ</sequence>